<comment type="function">
    <text evidence="1">Catalyzes the ATP-dependent phosphorylation of L-homoserine to L-homoserine phosphate.</text>
</comment>
<comment type="catalytic activity">
    <reaction evidence="1">
        <text>L-homoserine + ATP = O-phospho-L-homoserine + ADP + H(+)</text>
        <dbReference type="Rhea" id="RHEA:13985"/>
        <dbReference type="ChEBI" id="CHEBI:15378"/>
        <dbReference type="ChEBI" id="CHEBI:30616"/>
        <dbReference type="ChEBI" id="CHEBI:57476"/>
        <dbReference type="ChEBI" id="CHEBI:57590"/>
        <dbReference type="ChEBI" id="CHEBI:456216"/>
        <dbReference type="EC" id="2.7.1.39"/>
    </reaction>
</comment>
<comment type="pathway">
    <text evidence="1">Amino-acid biosynthesis; L-threonine biosynthesis; L-threonine from L-aspartate: step 4/5.</text>
</comment>
<comment type="subcellular location">
    <subcellularLocation>
        <location evidence="1">Cytoplasm</location>
    </subcellularLocation>
</comment>
<comment type="similarity">
    <text evidence="1">Belongs to the GHMP kinase family. Homoserine kinase subfamily.</text>
</comment>
<accession>Q043C5</accession>
<evidence type="ECO:0000255" key="1">
    <source>
        <dbReference type="HAMAP-Rule" id="MF_00384"/>
    </source>
</evidence>
<reference key="1">
    <citation type="journal article" date="2006" name="Proc. Natl. Acad. Sci. U.S.A.">
        <title>Comparative genomics of the lactic acid bacteria.</title>
        <authorList>
            <person name="Makarova K.S."/>
            <person name="Slesarev A."/>
            <person name="Wolf Y.I."/>
            <person name="Sorokin A."/>
            <person name="Mirkin B."/>
            <person name="Koonin E.V."/>
            <person name="Pavlov A."/>
            <person name="Pavlova N."/>
            <person name="Karamychev V."/>
            <person name="Polouchine N."/>
            <person name="Shakhova V."/>
            <person name="Grigoriev I."/>
            <person name="Lou Y."/>
            <person name="Rohksar D."/>
            <person name="Lucas S."/>
            <person name="Huang K."/>
            <person name="Goodstein D.M."/>
            <person name="Hawkins T."/>
            <person name="Plengvidhya V."/>
            <person name="Welker D."/>
            <person name="Hughes J."/>
            <person name="Goh Y."/>
            <person name="Benson A."/>
            <person name="Baldwin K."/>
            <person name="Lee J.-H."/>
            <person name="Diaz-Muniz I."/>
            <person name="Dosti B."/>
            <person name="Smeianov V."/>
            <person name="Wechter W."/>
            <person name="Barabote R."/>
            <person name="Lorca G."/>
            <person name="Altermann E."/>
            <person name="Barrangou R."/>
            <person name="Ganesan B."/>
            <person name="Xie Y."/>
            <person name="Rawsthorne H."/>
            <person name="Tamir D."/>
            <person name="Parker C."/>
            <person name="Breidt F."/>
            <person name="Broadbent J.R."/>
            <person name="Hutkins R."/>
            <person name="O'Sullivan D."/>
            <person name="Steele J."/>
            <person name="Unlu G."/>
            <person name="Saier M.H. Jr."/>
            <person name="Klaenhammer T."/>
            <person name="Richardson P."/>
            <person name="Kozyavkin S."/>
            <person name="Weimer B.C."/>
            <person name="Mills D.A."/>
        </authorList>
    </citation>
    <scope>NUCLEOTIDE SEQUENCE [LARGE SCALE GENOMIC DNA]</scope>
    <source>
        <strain>ATCC 33323 / DSM 20243 / BCRC 14619 / CIP 102991 / JCM 1131 / KCTC 3163 / NCIMB 11718 / NCTC 13722 / AM63</strain>
    </source>
</reference>
<protein>
    <recommendedName>
        <fullName evidence="1">Homoserine kinase</fullName>
        <shortName evidence="1">HK</shortName>
        <shortName evidence="1">HSK</shortName>
        <ecNumber evidence="1">2.7.1.39</ecNumber>
    </recommendedName>
</protein>
<proteinExistence type="inferred from homology"/>
<dbReference type="EC" id="2.7.1.39" evidence="1"/>
<dbReference type="EMBL" id="CP000413">
    <property type="protein sequence ID" value="ABJ60447.1"/>
    <property type="molecule type" value="Genomic_DNA"/>
</dbReference>
<dbReference type="RefSeq" id="WP_003651647.1">
    <property type="nucleotide sequence ID" value="NZ_WBMG01000002.1"/>
</dbReference>
<dbReference type="SMR" id="Q043C5"/>
<dbReference type="GeneID" id="29639599"/>
<dbReference type="KEGG" id="lga:LGAS_1074"/>
<dbReference type="HOGENOM" id="CLU_041243_0_0_9"/>
<dbReference type="BioCyc" id="LGAS324831:G1G6Y-1074-MONOMER"/>
<dbReference type="UniPathway" id="UPA00050">
    <property type="reaction ID" value="UER00064"/>
</dbReference>
<dbReference type="Proteomes" id="UP000000664">
    <property type="component" value="Chromosome"/>
</dbReference>
<dbReference type="GO" id="GO:0005737">
    <property type="term" value="C:cytoplasm"/>
    <property type="evidence" value="ECO:0007669"/>
    <property type="project" value="UniProtKB-SubCell"/>
</dbReference>
<dbReference type="GO" id="GO:0005524">
    <property type="term" value="F:ATP binding"/>
    <property type="evidence" value="ECO:0007669"/>
    <property type="project" value="UniProtKB-UniRule"/>
</dbReference>
<dbReference type="GO" id="GO:0004413">
    <property type="term" value="F:homoserine kinase activity"/>
    <property type="evidence" value="ECO:0007669"/>
    <property type="project" value="UniProtKB-UniRule"/>
</dbReference>
<dbReference type="GO" id="GO:0009088">
    <property type="term" value="P:threonine biosynthetic process"/>
    <property type="evidence" value="ECO:0007669"/>
    <property type="project" value="UniProtKB-UniRule"/>
</dbReference>
<dbReference type="Gene3D" id="3.30.230.10">
    <property type="match status" value="1"/>
</dbReference>
<dbReference type="Gene3D" id="3.30.70.890">
    <property type="entry name" value="GHMP kinase, C-terminal domain"/>
    <property type="match status" value="1"/>
</dbReference>
<dbReference type="HAMAP" id="MF_00384">
    <property type="entry name" value="Homoser_kinase"/>
    <property type="match status" value="1"/>
</dbReference>
<dbReference type="InterPro" id="IPR013750">
    <property type="entry name" value="GHMP_kinase_C_dom"/>
</dbReference>
<dbReference type="InterPro" id="IPR036554">
    <property type="entry name" value="GHMP_kinase_C_sf"/>
</dbReference>
<dbReference type="InterPro" id="IPR006204">
    <property type="entry name" value="GHMP_kinase_N_dom"/>
</dbReference>
<dbReference type="InterPro" id="IPR006203">
    <property type="entry name" value="GHMP_knse_ATP-bd_CS"/>
</dbReference>
<dbReference type="InterPro" id="IPR000870">
    <property type="entry name" value="Homoserine_kinase"/>
</dbReference>
<dbReference type="InterPro" id="IPR020568">
    <property type="entry name" value="Ribosomal_Su5_D2-typ_SF"/>
</dbReference>
<dbReference type="InterPro" id="IPR014721">
    <property type="entry name" value="Ribsml_uS5_D2-typ_fold_subgr"/>
</dbReference>
<dbReference type="NCBIfam" id="TIGR00191">
    <property type="entry name" value="thrB"/>
    <property type="match status" value="1"/>
</dbReference>
<dbReference type="PANTHER" id="PTHR20861:SF1">
    <property type="entry name" value="HOMOSERINE KINASE"/>
    <property type="match status" value="1"/>
</dbReference>
<dbReference type="PANTHER" id="PTHR20861">
    <property type="entry name" value="HOMOSERINE/4-DIPHOSPHOCYTIDYL-2-C-METHYL-D-ERYTHRITOL KINASE"/>
    <property type="match status" value="1"/>
</dbReference>
<dbReference type="Pfam" id="PF08544">
    <property type="entry name" value="GHMP_kinases_C"/>
    <property type="match status" value="1"/>
</dbReference>
<dbReference type="Pfam" id="PF00288">
    <property type="entry name" value="GHMP_kinases_N"/>
    <property type="match status" value="1"/>
</dbReference>
<dbReference type="PIRSF" id="PIRSF000676">
    <property type="entry name" value="Homoser_kin"/>
    <property type="match status" value="1"/>
</dbReference>
<dbReference type="PRINTS" id="PR00958">
    <property type="entry name" value="HOMSERKINASE"/>
</dbReference>
<dbReference type="SUPFAM" id="SSF55060">
    <property type="entry name" value="GHMP Kinase, C-terminal domain"/>
    <property type="match status" value="1"/>
</dbReference>
<dbReference type="SUPFAM" id="SSF54211">
    <property type="entry name" value="Ribosomal protein S5 domain 2-like"/>
    <property type="match status" value="1"/>
</dbReference>
<dbReference type="PROSITE" id="PS00627">
    <property type="entry name" value="GHMP_KINASES_ATP"/>
    <property type="match status" value="1"/>
</dbReference>
<sequence>MKIFVPATSANMGPGFDCLGTAVSMFLELDVLETSDKWFVEHDMSGISHDESNLIVKTALELAPKLTPHRLSVKSQIPLSRGLGSSSTAIVAGIELANQLANLNLSQQDKCKIAAKIEGHPDNVMPAILGGMVVASKIEDQYYFQELPLIPFDFLAYIPNYELDTKASRNALPEKLPFKNATHASSILGTLTASLALQDYGTAKRLIEADEFHEPYRQKLVPELVKIRKIAHQHEAFATYLSGAGSTVMTTIEHSRTEEFIASLRKAGLDDRIEQLKASSQGVFIEK</sequence>
<name>KHSE_LACGA</name>
<organism>
    <name type="scientific">Lactobacillus gasseri (strain ATCC 33323 / DSM 20243 / BCRC 14619 / CIP 102991 / JCM 1131 / KCTC 3163 / NCIMB 11718 / NCTC 13722 / AM63)</name>
    <dbReference type="NCBI Taxonomy" id="324831"/>
    <lineage>
        <taxon>Bacteria</taxon>
        <taxon>Bacillati</taxon>
        <taxon>Bacillota</taxon>
        <taxon>Bacilli</taxon>
        <taxon>Lactobacillales</taxon>
        <taxon>Lactobacillaceae</taxon>
        <taxon>Lactobacillus</taxon>
    </lineage>
</organism>
<gene>
    <name evidence="1" type="primary">thrB</name>
    <name type="ordered locus">LGAS_1074</name>
</gene>
<feature type="chain" id="PRO_1000080124" description="Homoserine kinase">
    <location>
        <begin position="1"/>
        <end position="287"/>
    </location>
</feature>
<feature type="binding site" evidence="1">
    <location>
        <begin position="78"/>
        <end position="88"/>
    </location>
    <ligand>
        <name>ATP</name>
        <dbReference type="ChEBI" id="CHEBI:30616"/>
    </ligand>
</feature>
<keyword id="KW-0028">Amino-acid biosynthesis</keyword>
<keyword id="KW-0067">ATP-binding</keyword>
<keyword id="KW-0963">Cytoplasm</keyword>
<keyword id="KW-0418">Kinase</keyword>
<keyword id="KW-0547">Nucleotide-binding</keyword>
<keyword id="KW-0791">Threonine biosynthesis</keyword>
<keyword id="KW-0808">Transferase</keyword>